<feature type="chain" id="PRO_0000381000" description="Putative 8-amino-7-oxononanoate synthase">
    <location>
        <begin position="1"/>
        <end position="388"/>
    </location>
</feature>
<feature type="binding site" evidence="1">
    <location>
        <position position="22"/>
    </location>
    <ligand>
        <name>substrate</name>
    </ligand>
</feature>
<feature type="binding site" evidence="1">
    <location>
        <begin position="109"/>
        <end position="110"/>
    </location>
    <ligand>
        <name>pyridoxal 5'-phosphate</name>
        <dbReference type="ChEBI" id="CHEBI:597326"/>
    </ligand>
</feature>
<feature type="binding site" evidence="1">
    <location>
        <position position="134"/>
    </location>
    <ligand>
        <name>substrate</name>
    </ligand>
</feature>
<feature type="binding site" evidence="1">
    <location>
        <position position="182"/>
    </location>
    <ligand>
        <name>pyridoxal 5'-phosphate</name>
        <dbReference type="ChEBI" id="CHEBI:597326"/>
    </ligand>
</feature>
<feature type="binding site" evidence="1">
    <location>
        <begin position="207"/>
        <end position="210"/>
    </location>
    <ligand>
        <name>pyridoxal 5'-phosphate</name>
        <dbReference type="ChEBI" id="CHEBI:597326"/>
    </ligand>
</feature>
<feature type="binding site" evidence="1">
    <location>
        <begin position="237"/>
        <end position="240"/>
    </location>
    <ligand>
        <name>pyridoxal 5'-phosphate</name>
        <dbReference type="ChEBI" id="CHEBI:597326"/>
    </ligand>
</feature>
<feature type="binding site" evidence="1">
    <location>
        <position position="354"/>
    </location>
    <ligand>
        <name>substrate</name>
    </ligand>
</feature>
<feature type="modified residue" description="N6-(pyridoxal phosphate)lysine" evidence="1">
    <location>
        <position position="240"/>
    </location>
</feature>
<name>BIOF_GLOVI</name>
<protein>
    <recommendedName>
        <fullName>Putative 8-amino-7-oxononanoate synthase</fullName>
        <shortName>AONS</shortName>
        <ecNumber>2.3.1.47</ecNumber>
    </recommendedName>
    <alternativeName>
        <fullName>7-keto-8-amino-pelargonic acid synthase</fullName>
        <shortName>7-KAP synthase</shortName>
    </alternativeName>
    <alternativeName>
        <fullName>8-amino-7-ketopelargonate synthase</fullName>
    </alternativeName>
</protein>
<dbReference type="EC" id="2.3.1.47"/>
<dbReference type="EMBL" id="BA000045">
    <property type="protein sequence ID" value="BAC88338.1"/>
    <property type="molecule type" value="Genomic_DNA"/>
</dbReference>
<dbReference type="RefSeq" id="NP_923343.1">
    <property type="nucleotide sequence ID" value="NC_005125.1"/>
</dbReference>
<dbReference type="RefSeq" id="WP_011140400.1">
    <property type="nucleotide sequence ID" value="NC_005125.1"/>
</dbReference>
<dbReference type="SMR" id="Q7NNL4"/>
<dbReference type="FunCoup" id="Q7NNL4">
    <property type="interactions" value="238"/>
</dbReference>
<dbReference type="STRING" id="251221.gene:10757869"/>
<dbReference type="EnsemblBacteria" id="BAC88338">
    <property type="protein sequence ID" value="BAC88338"/>
    <property type="gene ID" value="BAC88338"/>
</dbReference>
<dbReference type="KEGG" id="gvi:gll0397"/>
<dbReference type="PATRIC" id="fig|251221.4.peg.403"/>
<dbReference type="eggNOG" id="COG0156">
    <property type="taxonomic scope" value="Bacteria"/>
</dbReference>
<dbReference type="HOGENOM" id="CLU_015846_11_3_3"/>
<dbReference type="InParanoid" id="Q7NNL4"/>
<dbReference type="OrthoDB" id="9807157at2"/>
<dbReference type="PhylomeDB" id="Q7NNL4"/>
<dbReference type="UniPathway" id="UPA00078"/>
<dbReference type="Proteomes" id="UP000000557">
    <property type="component" value="Chromosome"/>
</dbReference>
<dbReference type="GO" id="GO:0008710">
    <property type="term" value="F:8-amino-7-oxononanoate synthase activity"/>
    <property type="evidence" value="ECO:0000318"/>
    <property type="project" value="GO_Central"/>
</dbReference>
<dbReference type="GO" id="GO:0030170">
    <property type="term" value="F:pyridoxal phosphate binding"/>
    <property type="evidence" value="ECO:0007669"/>
    <property type="project" value="InterPro"/>
</dbReference>
<dbReference type="GO" id="GO:0009102">
    <property type="term" value="P:biotin biosynthetic process"/>
    <property type="evidence" value="ECO:0000318"/>
    <property type="project" value="GO_Central"/>
</dbReference>
<dbReference type="CDD" id="cd06454">
    <property type="entry name" value="KBL_like"/>
    <property type="match status" value="1"/>
</dbReference>
<dbReference type="Gene3D" id="3.90.1150.10">
    <property type="entry name" value="Aspartate Aminotransferase, domain 1"/>
    <property type="match status" value="1"/>
</dbReference>
<dbReference type="Gene3D" id="3.40.640.10">
    <property type="entry name" value="Type I PLP-dependent aspartate aminotransferase-like (Major domain)"/>
    <property type="match status" value="1"/>
</dbReference>
<dbReference type="InterPro" id="IPR001917">
    <property type="entry name" value="Aminotrans_II_pyridoxalP_BS"/>
</dbReference>
<dbReference type="InterPro" id="IPR004839">
    <property type="entry name" value="Aminotransferase_I/II_large"/>
</dbReference>
<dbReference type="InterPro" id="IPR050087">
    <property type="entry name" value="AON_synthase_class-II"/>
</dbReference>
<dbReference type="InterPro" id="IPR004723">
    <property type="entry name" value="AONS_Archaea/Proteobacteria"/>
</dbReference>
<dbReference type="InterPro" id="IPR015424">
    <property type="entry name" value="PyrdxlP-dep_Trfase"/>
</dbReference>
<dbReference type="InterPro" id="IPR015421">
    <property type="entry name" value="PyrdxlP-dep_Trfase_major"/>
</dbReference>
<dbReference type="InterPro" id="IPR015422">
    <property type="entry name" value="PyrdxlP-dep_Trfase_small"/>
</dbReference>
<dbReference type="NCBIfam" id="TIGR00858">
    <property type="entry name" value="bioF"/>
    <property type="match status" value="1"/>
</dbReference>
<dbReference type="PANTHER" id="PTHR13693:SF100">
    <property type="entry name" value="8-AMINO-7-OXONONANOATE SYNTHASE"/>
    <property type="match status" value="1"/>
</dbReference>
<dbReference type="PANTHER" id="PTHR13693">
    <property type="entry name" value="CLASS II AMINOTRANSFERASE/8-AMINO-7-OXONONANOATE SYNTHASE"/>
    <property type="match status" value="1"/>
</dbReference>
<dbReference type="Pfam" id="PF00155">
    <property type="entry name" value="Aminotran_1_2"/>
    <property type="match status" value="1"/>
</dbReference>
<dbReference type="SUPFAM" id="SSF53383">
    <property type="entry name" value="PLP-dependent transferases"/>
    <property type="match status" value="1"/>
</dbReference>
<dbReference type="PROSITE" id="PS00599">
    <property type="entry name" value="AA_TRANSFER_CLASS_2"/>
    <property type="match status" value="1"/>
</dbReference>
<keyword id="KW-0093">Biotin biosynthesis</keyword>
<keyword id="KW-0663">Pyridoxal phosphate</keyword>
<keyword id="KW-1185">Reference proteome</keyword>
<keyword id="KW-0808">Transferase</keyword>
<proteinExistence type="inferred from homology"/>
<organism>
    <name type="scientific">Gloeobacter violaceus (strain ATCC 29082 / PCC 7421)</name>
    <dbReference type="NCBI Taxonomy" id="251221"/>
    <lineage>
        <taxon>Bacteria</taxon>
        <taxon>Bacillati</taxon>
        <taxon>Cyanobacteriota</taxon>
        <taxon>Cyanophyceae</taxon>
        <taxon>Gloeobacterales</taxon>
        <taxon>Gloeobacteraceae</taxon>
        <taxon>Gloeobacter</taxon>
    </lineage>
</organism>
<evidence type="ECO:0000250" key="1"/>
<evidence type="ECO:0000305" key="2"/>
<accession>Q7NNL4</accession>
<comment type="function">
    <text evidence="1">Catalyzes the decarboxylative condensation of pimeloyl-[acyl-carrier protein] and L-alanine to produce 8-amino-7-oxononanoate (AON), [acyl-carrier protein], and carbon dioxide.</text>
</comment>
<comment type="catalytic activity">
    <reaction>
        <text>6-carboxyhexanoyl-[ACP] + L-alanine + H(+) = (8S)-8-amino-7-oxononanoate + holo-[ACP] + CO2</text>
        <dbReference type="Rhea" id="RHEA:42288"/>
        <dbReference type="Rhea" id="RHEA-COMP:9685"/>
        <dbReference type="Rhea" id="RHEA-COMP:9955"/>
        <dbReference type="ChEBI" id="CHEBI:15378"/>
        <dbReference type="ChEBI" id="CHEBI:16526"/>
        <dbReference type="ChEBI" id="CHEBI:57972"/>
        <dbReference type="ChEBI" id="CHEBI:64479"/>
        <dbReference type="ChEBI" id="CHEBI:78846"/>
        <dbReference type="ChEBI" id="CHEBI:149468"/>
        <dbReference type="EC" id="2.3.1.47"/>
    </reaction>
</comment>
<comment type="cofactor">
    <cofactor evidence="1">
        <name>pyridoxal 5'-phosphate</name>
        <dbReference type="ChEBI" id="CHEBI:597326"/>
    </cofactor>
</comment>
<comment type="pathway">
    <text>Cofactor biosynthesis; biotin biosynthesis.</text>
</comment>
<comment type="subunit">
    <text evidence="1">Homodimer.</text>
</comment>
<comment type="similarity">
    <text evidence="2">Belongs to the class-II pyridoxal-phosphate-dependent aminotransferase family. BioF subfamily.</text>
</comment>
<sequence length="388" mass="41702">MADPYGWIRADLESLHRVGWYRTTRTHNGLAGPQMDVDGKPVLQFASNDYLGLSGDERLIEAACRAVRLYGAGATGSRLLSGERDVHRELEQALAGWKGCDDCLVFSSGYLANLGTIPALVGKRDLVVGDEYNHACLRGGAELSGAVHRLYPHGDCSALESLLIEQRERHRRCLICTDSVFSMDGDLIDLARIADLARRYGCMLLVDEAHATGVLGPTGAGAVEQLGLTRSLVQMGTLSKALGSQGGYVCGSAELVDYLRNRARSFVYTTGLAPAAAAAALEAVHIARTETPRRALLRQNIARLRAGIDEIGIAQLPSDAAILCLWVGDIEATHCFAGELFEEGIFAPAVRPPTVPTSRIRLSLMATHTEAMIDSLIAALTQVSSRFS</sequence>
<reference key="1">
    <citation type="journal article" date="2003" name="DNA Res.">
        <title>Complete genome structure of Gloeobacter violaceus PCC 7421, a cyanobacterium that lacks thylakoids.</title>
        <authorList>
            <person name="Nakamura Y."/>
            <person name="Kaneko T."/>
            <person name="Sato S."/>
            <person name="Mimuro M."/>
            <person name="Miyashita H."/>
            <person name="Tsuchiya T."/>
            <person name="Sasamoto S."/>
            <person name="Watanabe A."/>
            <person name="Kawashima K."/>
            <person name="Kishida Y."/>
            <person name="Kiyokawa C."/>
            <person name="Kohara M."/>
            <person name="Matsumoto M."/>
            <person name="Matsuno A."/>
            <person name="Nakazaki N."/>
            <person name="Shimpo S."/>
            <person name="Takeuchi C."/>
            <person name="Yamada M."/>
            <person name="Tabata S."/>
        </authorList>
    </citation>
    <scope>NUCLEOTIDE SEQUENCE [LARGE SCALE GENOMIC DNA]</scope>
    <source>
        <strain>ATCC 29082 / PCC 7421</strain>
    </source>
</reference>
<gene>
    <name type="primary">bioF</name>
    <name type="ordered locus">gll0397</name>
</gene>